<evidence type="ECO:0000255" key="1">
    <source>
        <dbReference type="HAMAP-Rule" id="MF_00531"/>
    </source>
</evidence>
<evidence type="ECO:0000305" key="2"/>
<accession>Q8R7V8</accession>
<feature type="chain" id="PRO_0000129929" description="Small ribosomal subunit protein uS19">
    <location>
        <begin position="1"/>
        <end position="93"/>
    </location>
</feature>
<reference key="1">
    <citation type="journal article" date="2002" name="Genome Res.">
        <title>A complete sequence of the T. tengcongensis genome.</title>
        <authorList>
            <person name="Bao Q."/>
            <person name="Tian Y."/>
            <person name="Li W."/>
            <person name="Xu Z."/>
            <person name="Xuan Z."/>
            <person name="Hu S."/>
            <person name="Dong W."/>
            <person name="Yang J."/>
            <person name="Chen Y."/>
            <person name="Xue Y."/>
            <person name="Xu Y."/>
            <person name="Lai X."/>
            <person name="Huang L."/>
            <person name="Dong X."/>
            <person name="Ma Y."/>
            <person name="Ling L."/>
            <person name="Tan H."/>
            <person name="Chen R."/>
            <person name="Wang J."/>
            <person name="Yu J."/>
            <person name="Yang H."/>
        </authorList>
    </citation>
    <scope>NUCLEOTIDE SEQUENCE [LARGE SCALE GENOMIC DNA]</scope>
    <source>
        <strain>DSM 15242 / JCM 11007 / NBRC 100824 / MB4</strain>
    </source>
</reference>
<gene>
    <name evidence="1" type="primary">rpsS</name>
    <name type="ordered locus">TTE2289</name>
</gene>
<proteinExistence type="inferred from homology"/>
<protein>
    <recommendedName>
        <fullName evidence="1">Small ribosomal subunit protein uS19</fullName>
    </recommendedName>
    <alternativeName>
        <fullName evidence="2">30S ribosomal protein S19</fullName>
    </alternativeName>
</protein>
<comment type="function">
    <text evidence="1">Protein S19 forms a complex with S13 that binds strongly to the 16S ribosomal RNA.</text>
</comment>
<comment type="similarity">
    <text evidence="1">Belongs to the universal ribosomal protein uS19 family.</text>
</comment>
<keyword id="KW-1185">Reference proteome</keyword>
<keyword id="KW-0687">Ribonucleoprotein</keyword>
<keyword id="KW-0689">Ribosomal protein</keyword>
<keyword id="KW-0694">RNA-binding</keyword>
<keyword id="KW-0699">rRNA-binding</keyword>
<dbReference type="EMBL" id="AE008691">
    <property type="protein sequence ID" value="AAM25431.1"/>
    <property type="molecule type" value="Genomic_DNA"/>
</dbReference>
<dbReference type="RefSeq" id="WP_011026334.1">
    <property type="nucleotide sequence ID" value="NC_003869.1"/>
</dbReference>
<dbReference type="SMR" id="Q8R7V8"/>
<dbReference type="STRING" id="273068.TTE2289"/>
<dbReference type="KEGG" id="tte:TTE2289"/>
<dbReference type="eggNOG" id="COG0185">
    <property type="taxonomic scope" value="Bacteria"/>
</dbReference>
<dbReference type="HOGENOM" id="CLU_144911_0_1_9"/>
<dbReference type="OrthoDB" id="9797833at2"/>
<dbReference type="Proteomes" id="UP000000555">
    <property type="component" value="Chromosome"/>
</dbReference>
<dbReference type="GO" id="GO:0005737">
    <property type="term" value="C:cytoplasm"/>
    <property type="evidence" value="ECO:0007669"/>
    <property type="project" value="UniProtKB-ARBA"/>
</dbReference>
<dbReference type="GO" id="GO:0015935">
    <property type="term" value="C:small ribosomal subunit"/>
    <property type="evidence" value="ECO:0007669"/>
    <property type="project" value="InterPro"/>
</dbReference>
<dbReference type="GO" id="GO:0019843">
    <property type="term" value="F:rRNA binding"/>
    <property type="evidence" value="ECO:0007669"/>
    <property type="project" value="UniProtKB-UniRule"/>
</dbReference>
<dbReference type="GO" id="GO:0003735">
    <property type="term" value="F:structural constituent of ribosome"/>
    <property type="evidence" value="ECO:0007669"/>
    <property type="project" value="InterPro"/>
</dbReference>
<dbReference type="GO" id="GO:0000028">
    <property type="term" value="P:ribosomal small subunit assembly"/>
    <property type="evidence" value="ECO:0007669"/>
    <property type="project" value="TreeGrafter"/>
</dbReference>
<dbReference type="GO" id="GO:0006412">
    <property type="term" value="P:translation"/>
    <property type="evidence" value="ECO:0007669"/>
    <property type="project" value="UniProtKB-UniRule"/>
</dbReference>
<dbReference type="FunFam" id="3.30.860.10:FF:000001">
    <property type="entry name" value="30S ribosomal protein S19"/>
    <property type="match status" value="1"/>
</dbReference>
<dbReference type="Gene3D" id="3.30.860.10">
    <property type="entry name" value="30s Ribosomal Protein S19, Chain A"/>
    <property type="match status" value="1"/>
</dbReference>
<dbReference type="HAMAP" id="MF_00531">
    <property type="entry name" value="Ribosomal_uS19"/>
    <property type="match status" value="1"/>
</dbReference>
<dbReference type="InterPro" id="IPR002222">
    <property type="entry name" value="Ribosomal_uS19"/>
</dbReference>
<dbReference type="InterPro" id="IPR005732">
    <property type="entry name" value="Ribosomal_uS19_bac-type"/>
</dbReference>
<dbReference type="InterPro" id="IPR020934">
    <property type="entry name" value="Ribosomal_uS19_CS"/>
</dbReference>
<dbReference type="InterPro" id="IPR023575">
    <property type="entry name" value="Ribosomal_uS19_SF"/>
</dbReference>
<dbReference type="NCBIfam" id="TIGR01050">
    <property type="entry name" value="rpsS_bact"/>
    <property type="match status" value="1"/>
</dbReference>
<dbReference type="PANTHER" id="PTHR11880">
    <property type="entry name" value="RIBOSOMAL PROTEIN S19P FAMILY MEMBER"/>
    <property type="match status" value="1"/>
</dbReference>
<dbReference type="PANTHER" id="PTHR11880:SF8">
    <property type="entry name" value="SMALL RIBOSOMAL SUBUNIT PROTEIN US19M"/>
    <property type="match status" value="1"/>
</dbReference>
<dbReference type="Pfam" id="PF00203">
    <property type="entry name" value="Ribosomal_S19"/>
    <property type="match status" value="1"/>
</dbReference>
<dbReference type="PIRSF" id="PIRSF002144">
    <property type="entry name" value="Ribosomal_S19"/>
    <property type="match status" value="1"/>
</dbReference>
<dbReference type="PRINTS" id="PR00975">
    <property type="entry name" value="RIBOSOMALS19"/>
</dbReference>
<dbReference type="SUPFAM" id="SSF54570">
    <property type="entry name" value="Ribosomal protein S19"/>
    <property type="match status" value="1"/>
</dbReference>
<dbReference type="PROSITE" id="PS00323">
    <property type="entry name" value="RIBOSOMAL_S19"/>
    <property type="match status" value="1"/>
</dbReference>
<organism>
    <name type="scientific">Caldanaerobacter subterraneus subsp. tengcongensis (strain DSM 15242 / JCM 11007 / NBRC 100824 / MB4)</name>
    <name type="common">Thermoanaerobacter tengcongensis</name>
    <dbReference type="NCBI Taxonomy" id="273068"/>
    <lineage>
        <taxon>Bacteria</taxon>
        <taxon>Bacillati</taxon>
        <taxon>Bacillota</taxon>
        <taxon>Clostridia</taxon>
        <taxon>Thermoanaerobacterales</taxon>
        <taxon>Thermoanaerobacteraceae</taxon>
        <taxon>Caldanaerobacter</taxon>
    </lineage>
</organism>
<name>RS19_CALS4</name>
<sequence length="93" mass="10494">MSRSVKKGPFVDPKLLKKIIEMNKKNEKKVIKTWSRDSTIVPEMVGHTIAVHDGRKHVPVYITEAMVGHKLGEFAPTRTFRGHAGSEKTTKVK</sequence>